<reference key="1">
    <citation type="submission" date="2006-06" db="EMBL/GenBank/DDBJ databases">
        <authorList>
            <consortium name="NIH - Zebrafish Gene Collection (ZGC) project"/>
        </authorList>
    </citation>
    <scope>NUCLEOTIDE SEQUENCE [LARGE SCALE MRNA]</scope>
</reference>
<reference key="2">
    <citation type="submission" date="2004-12" db="EMBL/GenBank/DDBJ databases">
        <title>Zebrafish Nxf (zNxf).</title>
        <authorList>
            <person name="Flood W.D."/>
            <person name="Lardelli M.T."/>
            <person name="Koblar S.A."/>
        </authorList>
    </citation>
    <scope>NUCLEOTIDE SEQUENCE [MRNA] OF 487-682</scope>
</reference>
<reference key="3">
    <citation type="journal article" date="2014" name="Front. Neuroanat.">
        <title>Activity-dependent expression of neuronal PAS domain-containing protein 4 (npas4a) in the developing zebrafish brain.</title>
        <authorList>
            <person name="Klaric T."/>
            <person name="Lardelli M."/>
            <person name="Key B."/>
            <person name="Koblar S."/>
            <person name="Lewis M."/>
        </authorList>
    </citation>
    <scope>TISSUE SPECIFICITY</scope>
    <scope>INDUCTION</scope>
</reference>
<protein>
    <recommendedName>
        <fullName evidence="7">Neuronal PAS domain-containing protein 4A</fullName>
        <shortName evidence="7">Neuronal PAS4A</shortName>
    </recommendedName>
</protein>
<comment type="function">
    <text evidence="1">Transcription factor expressed in neurons of the brain that regulates the excitatory-inhibitory balance within neural circuits and is required for contextual memory in the hippocampus. Plays a key role in the structural and functional plasticity of neurons. Acts as an early-response transcription factor in both excitatory and inhibitory neurons, where it induces distinct but overlapping sets of late-response genes in these two types of neurons, allowing the synapses that form on inhibitory and excitatory neurons to be modified by neuronal activity in a manner specific to their function within a circuit, thereby facilitating appropriate circuit responses to sensory experience.</text>
</comment>
<comment type="subunit">
    <text evidence="1">Efficient DNA binding requires dimerization with another bHLH protein.</text>
</comment>
<comment type="subcellular location">
    <subcellularLocation>
        <location evidence="1 3">Nucleus</location>
    </subcellularLocation>
</comment>
<comment type="tissue specificity">
    <text evidence="5">Brain-specific.</text>
</comment>
<comment type="induction">
    <text evidence="5">Expression is regulated by neuronal activity.</text>
</comment>
<organism>
    <name type="scientific">Danio rerio</name>
    <name type="common">Zebrafish</name>
    <name type="synonym">Brachydanio rerio</name>
    <dbReference type="NCBI Taxonomy" id="7955"/>
    <lineage>
        <taxon>Eukaryota</taxon>
        <taxon>Metazoa</taxon>
        <taxon>Chordata</taxon>
        <taxon>Craniata</taxon>
        <taxon>Vertebrata</taxon>
        <taxon>Euteleostomi</taxon>
        <taxon>Actinopterygii</taxon>
        <taxon>Neopterygii</taxon>
        <taxon>Teleostei</taxon>
        <taxon>Ostariophysi</taxon>
        <taxon>Cypriniformes</taxon>
        <taxon>Danionidae</taxon>
        <taxon>Danioninae</taxon>
        <taxon>Danio</taxon>
    </lineage>
</organism>
<feature type="chain" id="PRO_0000248225" description="Neuronal PAS domain-containing protein 4A">
    <location>
        <begin position="1"/>
        <end position="933"/>
    </location>
</feature>
<feature type="domain" description="bHLH" evidence="3">
    <location>
        <begin position="1"/>
        <end position="53"/>
    </location>
</feature>
<feature type="domain" description="PAS 1" evidence="2">
    <location>
        <begin position="74"/>
        <end position="148"/>
    </location>
</feature>
<feature type="domain" description="PAS 2" evidence="2">
    <location>
        <begin position="220"/>
        <end position="290"/>
    </location>
</feature>
<feature type="domain" description="PAC">
    <location>
        <begin position="295"/>
        <end position="334"/>
    </location>
</feature>
<feature type="region of interest" description="Basic motif; degenerate" evidence="3">
    <location>
        <begin position="1"/>
        <end position="13"/>
    </location>
</feature>
<feature type="region of interest" description="Helix-loop-helix motif" evidence="3">
    <location>
        <begin position="14"/>
        <end position="53"/>
    </location>
</feature>
<feature type="region of interest" description="Disordered" evidence="4">
    <location>
        <begin position="361"/>
        <end position="451"/>
    </location>
</feature>
<feature type="region of interest" description="Disordered" evidence="4">
    <location>
        <begin position="514"/>
        <end position="573"/>
    </location>
</feature>
<feature type="region of interest" description="Disordered" evidence="4">
    <location>
        <begin position="750"/>
        <end position="776"/>
    </location>
</feature>
<feature type="compositionally biased region" description="Polar residues" evidence="4">
    <location>
        <begin position="361"/>
        <end position="398"/>
    </location>
</feature>
<feature type="compositionally biased region" description="Low complexity" evidence="4">
    <location>
        <begin position="399"/>
        <end position="411"/>
    </location>
</feature>
<feature type="compositionally biased region" description="Low complexity" evidence="4">
    <location>
        <begin position="440"/>
        <end position="451"/>
    </location>
</feature>
<feature type="compositionally biased region" description="Low complexity" evidence="4">
    <location>
        <begin position="538"/>
        <end position="560"/>
    </location>
</feature>
<feature type="compositionally biased region" description="Low complexity" evidence="4">
    <location>
        <begin position="751"/>
        <end position="769"/>
    </location>
</feature>
<feature type="sequence conflict" description="In Ref. 2; AAW31762." evidence="7" ref="2">
    <original>C</original>
    <variation>Y</variation>
    <location>
        <position position="504"/>
    </location>
</feature>
<keyword id="KW-0010">Activator</keyword>
<keyword id="KW-0221">Differentiation</keyword>
<keyword id="KW-0238">DNA-binding</keyword>
<keyword id="KW-0524">Neurogenesis</keyword>
<keyword id="KW-0539">Nucleus</keyword>
<keyword id="KW-1185">Reference proteome</keyword>
<keyword id="KW-0677">Repeat</keyword>
<keyword id="KW-0804">Transcription</keyword>
<keyword id="KW-0805">Transcription regulation</keyword>
<name>NPS4A_DANRE</name>
<evidence type="ECO:0000250" key="1">
    <source>
        <dbReference type="UniProtKB" id="Q8BGD7"/>
    </source>
</evidence>
<evidence type="ECO:0000255" key="2">
    <source>
        <dbReference type="PROSITE-ProRule" id="PRU00140"/>
    </source>
</evidence>
<evidence type="ECO:0000255" key="3">
    <source>
        <dbReference type="PROSITE-ProRule" id="PRU00981"/>
    </source>
</evidence>
<evidence type="ECO:0000256" key="4">
    <source>
        <dbReference type="SAM" id="MobiDB-lite"/>
    </source>
</evidence>
<evidence type="ECO:0000269" key="5">
    <source>
    </source>
</evidence>
<evidence type="ECO:0000303" key="6">
    <source ref="1"/>
</evidence>
<evidence type="ECO:0000305" key="7"/>
<proteinExistence type="evidence at transcript level"/>
<dbReference type="EMBL" id="BC117648">
    <property type="protein sequence ID" value="AAI17649.1"/>
    <property type="molecule type" value="mRNA"/>
</dbReference>
<dbReference type="EMBL" id="AY847288">
    <property type="protein sequence ID" value="AAW31762.1"/>
    <property type="molecule type" value="mRNA"/>
</dbReference>
<dbReference type="RefSeq" id="NP_001038786.1">
    <property type="nucleotide sequence ID" value="NM_001045321.1"/>
</dbReference>
<dbReference type="SMR" id="Q1ECW2"/>
<dbReference type="FunCoup" id="Q1ECW2">
    <property type="interactions" value="1576"/>
</dbReference>
<dbReference type="STRING" id="7955.ENSDARP00000072616"/>
<dbReference type="PaxDb" id="7955-ENSDARP00000072616"/>
<dbReference type="Ensembl" id="ENSDART00000078154">
    <property type="protein sequence ID" value="ENSDARP00000072616"/>
    <property type="gene ID" value="ENSDARG00000055752"/>
</dbReference>
<dbReference type="GeneID" id="724016"/>
<dbReference type="KEGG" id="dre:724016"/>
<dbReference type="AGR" id="ZFIN:ZDB-GENE-060616-396"/>
<dbReference type="CTD" id="724016"/>
<dbReference type="ZFIN" id="ZDB-GENE-060616-396">
    <property type="gene designation" value="npas4a"/>
</dbReference>
<dbReference type="eggNOG" id="ENOG502QRXX">
    <property type="taxonomic scope" value="Eukaryota"/>
</dbReference>
<dbReference type="HOGENOM" id="CLU_013890_0_0_1"/>
<dbReference type="InParanoid" id="Q1ECW2"/>
<dbReference type="OMA" id="TKTYFTQ"/>
<dbReference type="OrthoDB" id="9978016at2759"/>
<dbReference type="PhylomeDB" id="Q1ECW2"/>
<dbReference type="TreeFam" id="TF319684"/>
<dbReference type="Reactome" id="R-DRE-9768919">
    <property type="pathway name" value="NPAS4 regulates expression of target genes"/>
</dbReference>
<dbReference type="PRO" id="PR:Q1ECW2"/>
<dbReference type="Proteomes" id="UP000000437">
    <property type="component" value="Chromosome 14"/>
</dbReference>
<dbReference type="Bgee" id="ENSDARG00000055752">
    <property type="expression patterns" value="Expressed in brain and 4 other cell types or tissues"/>
</dbReference>
<dbReference type="GO" id="GO:0005634">
    <property type="term" value="C:nucleus"/>
    <property type="evidence" value="ECO:0007669"/>
    <property type="project" value="UniProtKB-SubCell"/>
</dbReference>
<dbReference type="GO" id="GO:0098794">
    <property type="term" value="C:postsynapse"/>
    <property type="evidence" value="ECO:0007669"/>
    <property type="project" value="GOC"/>
</dbReference>
<dbReference type="GO" id="GO:0000981">
    <property type="term" value="F:DNA-binding transcription factor activity, RNA polymerase II-specific"/>
    <property type="evidence" value="ECO:0000250"/>
    <property type="project" value="UniProtKB"/>
</dbReference>
<dbReference type="GO" id="GO:0046983">
    <property type="term" value="F:protein dimerization activity"/>
    <property type="evidence" value="ECO:0007669"/>
    <property type="project" value="InterPro"/>
</dbReference>
<dbReference type="GO" id="GO:0000978">
    <property type="term" value="F:RNA polymerase II cis-regulatory region sequence-specific DNA binding"/>
    <property type="evidence" value="ECO:0000250"/>
    <property type="project" value="UniProtKB"/>
</dbReference>
<dbReference type="GO" id="GO:0000977">
    <property type="term" value="F:RNA polymerase II transcription regulatory region sequence-specific DNA binding"/>
    <property type="evidence" value="ECO:0000318"/>
    <property type="project" value="GO_Central"/>
</dbReference>
<dbReference type="GO" id="GO:0001568">
    <property type="term" value="P:blood vessel development"/>
    <property type="evidence" value="ECO:0000316"/>
    <property type="project" value="ZFIN"/>
</dbReference>
<dbReference type="GO" id="GO:0030154">
    <property type="term" value="P:cell differentiation"/>
    <property type="evidence" value="ECO:0007669"/>
    <property type="project" value="UniProtKB-KW"/>
</dbReference>
<dbReference type="GO" id="GO:0060079">
    <property type="term" value="P:excitatory postsynaptic potential"/>
    <property type="evidence" value="ECO:0000250"/>
    <property type="project" value="UniProtKB"/>
</dbReference>
<dbReference type="GO" id="GO:0030900">
    <property type="term" value="P:forebrain development"/>
    <property type="evidence" value="ECO:0000315"/>
    <property type="project" value="ZFIN"/>
</dbReference>
<dbReference type="GO" id="GO:0060080">
    <property type="term" value="P:inhibitory postsynaptic potential"/>
    <property type="evidence" value="ECO:0000250"/>
    <property type="project" value="UniProtKB"/>
</dbReference>
<dbReference type="GO" id="GO:1904862">
    <property type="term" value="P:inhibitory synapse assembly"/>
    <property type="evidence" value="ECO:0000250"/>
    <property type="project" value="UniProtKB"/>
</dbReference>
<dbReference type="GO" id="GO:0007612">
    <property type="term" value="P:learning"/>
    <property type="evidence" value="ECO:0000250"/>
    <property type="project" value="UniProtKB"/>
</dbReference>
<dbReference type="GO" id="GO:0007616">
    <property type="term" value="P:long-term memory"/>
    <property type="evidence" value="ECO:0000250"/>
    <property type="project" value="UniProtKB"/>
</dbReference>
<dbReference type="GO" id="GO:0045893">
    <property type="term" value="P:positive regulation of DNA-templated transcription"/>
    <property type="evidence" value="ECO:0000250"/>
    <property type="project" value="UniProtKB"/>
</dbReference>
<dbReference type="GO" id="GO:0045944">
    <property type="term" value="P:positive regulation of transcription by RNA polymerase II"/>
    <property type="evidence" value="ECO:0000250"/>
    <property type="project" value="UniProtKB"/>
</dbReference>
<dbReference type="GO" id="GO:0048167">
    <property type="term" value="P:regulation of synaptic plasticity"/>
    <property type="evidence" value="ECO:0000250"/>
    <property type="project" value="UniProtKB"/>
</dbReference>
<dbReference type="GO" id="GO:0032228">
    <property type="term" value="P:regulation of synaptic transmission, GABAergic"/>
    <property type="evidence" value="ECO:0000250"/>
    <property type="project" value="UniProtKB"/>
</dbReference>
<dbReference type="GO" id="GO:0006357">
    <property type="term" value="P:regulation of transcription by RNA polymerase II"/>
    <property type="evidence" value="ECO:0000318"/>
    <property type="project" value="GO_Central"/>
</dbReference>
<dbReference type="GO" id="GO:0007614">
    <property type="term" value="P:short-term memory"/>
    <property type="evidence" value="ECO:0000250"/>
    <property type="project" value="UniProtKB"/>
</dbReference>
<dbReference type="GO" id="GO:0035176">
    <property type="term" value="P:social behavior"/>
    <property type="evidence" value="ECO:0000250"/>
    <property type="project" value="UniProtKB"/>
</dbReference>
<dbReference type="CDD" id="cd19697">
    <property type="entry name" value="bHLH-PAS_NPAS4_PASD10"/>
    <property type="match status" value="1"/>
</dbReference>
<dbReference type="CDD" id="cd00130">
    <property type="entry name" value="PAS"/>
    <property type="match status" value="1"/>
</dbReference>
<dbReference type="Gene3D" id="3.30.450.20">
    <property type="entry name" value="PAS domain"/>
    <property type="match status" value="2"/>
</dbReference>
<dbReference type="InterPro" id="IPR011598">
    <property type="entry name" value="bHLH_dom"/>
</dbReference>
<dbReference type="InterPro" id="IPR056192">
    <property type="entry name" value="bHLH_NPAS4"/>
</dbReference>
<dbReference type="InterPro" id="IPR000014">
    <property type="entry name" value="PAS"/>
</dbReference>
<dbReference type="InterPro" id="IPR035965">
    <property type="entry name" value="PAS-like_dom_sf"/>
</dbReference>
<dbReference type="PANTHER" id="PTHR23043">
    <property type="entry name" value="HYPOXIA-INDUCIBLE FACTOR 1 ALPHA"/>
    <property type="match status" value="1"/>
</dbReference>
<dbReference type="PANTHER" id="PTHR23043:SF24">
    <property type="entry name" value="NEURONAL PAS DOMAIN-CONTAINING PROTEIN 4"/>
    <property type="match status" value="1"/>
</dbReference>
<dbReference type="Pfam" id="PF23183">
    <property type="entry name" value="bHLH_NPAS4"/>
    <property type="match status" value="1"/>
</dbReference>
<dbReference type="Pfam" id="PF14598">
    <property type="entry name" value="PAS_11"/>
    <property type="match status" value="1"/>
</dbReference>
<dbReference type="SMART" id="SM00091">
    <property type="entry name" value="PAS"/>
    <property type="match status" value="2"/>
</dbReference>
<dbReference type="SUPFAM" id="SSF55785">
    <property type="entry name" value="PYP-like sensor domain (PAS domain)"/>
    <property type="match status" value="1"/>
</dbReference>
<dbReference type="PROSITE" id="PS50888">
    <property type="entry name" value="BHLH"/>
    <property type="match status" value="1"/>
</dbReference>
<dbReference type="PROSITE" id="PS50112">
    <property type="entry name" value="PAS"/>
    <property type="match status" value="1"/>
</dbReference>
<gene>
    <name type="primary">npas4a</name>
    <name evidence="6" type="ORF">zgc:136764</name>
</gene>
<accession>Q1ECW2</accession>
<accession>Q5I7E4</accession>
<sequence>MYRSTKGASKARRDQINAEIRNLKDLLPISDADKSRLSYLHIMSLACMYTRKSVFFSQDITTASSAEETTGFLSFYELNELIQGMPGFLLLLTGEGKLLYLSDSVSDHLGHSMVDLVAQGDSVYDIIDTADHFIMRSNLVPPTSPDTDRLFRCRFNTSKSVRRQSAGNKLVLIRARCLSQTPSESSPGSYWTSNPVWVCFCAPLEPHTSRGGTASDRESTSASALESSFFLPCFRSQHSRDMRLHEAQESVSVYLGLNVEILRSQSWYSFLHPQDLSHASAQHCSLLREGGEGRAEMVVRVETADHSWVWLYMVLQLETGETPIVSNNYIISETEAWSVRQQLSSEQTQLSLVLGSSTSQQESVSLQSPETLSSPDQVFTPGSSGLSGQSFDFSTAACSTGSTEEQGGSSSMEPAQVESGPRSSLSSMEEETFFQHEPSEPMASPSSASSPIPVTVATVSDLDFLTQNILLPPAFQIDPPLPVLPLPLPPVPTSQAQQTKEFVCTPPYTPQLGGSNFPFGEPHFSFDPTGATSPPPLGQTATVTTTTAPSLSPSAPSNPQSSPPPPTTTLSSLLPLTITSPTTEILFPVEPCSGSLYEKLPPTPDSPGDGDCTVMTLPEVRGPLYVDVPHGPLPYPPEGLLTPEASPGKQPSLPFFSSLRDREKERTEISLLAQHISTLAEGFYLDPLLAKLVPSTLSEHSQSPDSDGLDSIPLLGEFYPLKSWKGLDLPIFQDDESLFEESVLETLLQDLSSSPPLSPTPSSSSHSSPPSSPSTPECWCPSLHFDGVSAVSAGHFCSVQSAHCNNEAGRGAMMSPVNAGNMTDTKAAGEVPMETDVASSPLFTGIPTSPPLQLTASPASPILMPVSSPVSPPSPGLPCAQSLLEELAALEPMFGAGASIAPGLGQQPELYQLQSHVPQQCFRKDGSGSDPPF</sequence>